<protein>
    <recommendedName>
        <fullName evidence="1">Chaperone protein DnaK</fullName>
    </recommendedName>
    <alternativeName>
        <fullName evidence="1">HSP70</fullName>
    </alternativeName>
    <alternativeName>
        <fullName evidence="1">Heat shock 70 kDa protein</fullName>
    </alternativeName>
    <alternativeName>
        <fullName evidence="1">Heat shock protein 70</fullName>
    </alternativeName>
</protein>
<keyword id="KW-0067">ATP-binding</keyword>
<keyword id="KW-0143">Chaperone</keyword>
<keyword id="KW-0547">Nucleotide-binding</keyword>
<keyword id="KW-0597">Phosphoprotein</keyword>
<keyword id="KW-0346">Stress response</keyword>
<proteinExistence type="inferred from homology"/>
<evidence type="ECO:0000255" key="1">
    <source>
        <dbReference type="HAMAP-Rule" id="MF_00332"/>
    </source>
</evidence>
<evidence type="ECO:0000256" key="2">
    <source>
        <dbReference type="SAM" id="MobiDB-lite"/>
    </source>
</evidence>
<reference key="1">
    <citation type="journal article" date="2003" name="Lancet">
        <title>Genome sequence of Vibrio parahaemolyticus: a pathogenic mechanism distinct from that of V. cholerae.</title>
        <authorList>
            <person name="Makino K."/>
            <person name="Oshima K."/>
            <person name="Kurokawa K."/>
            <person name="Yokoyama K."/>
            <person name="Uda T."/>
            <person name="Tagomori K."/>
            <person name="Iijima Y."/>
            <person name="Najima M."/>
            <person name="Nakano M."/>
            <person name="Yamashita A."/>
            <person name="Kubota Y."/>
            <person name="Kimura S."/>
            <person name="Yasunaga T."/>
            <person name="Honda T."/>
            <person name="Shinagawa H."/>
            <person name="Hattori M."/>
            <person name="Iida T."/>
        </authorList>
    </citation>
    <scope>NUCLEOTIDE SEQUENCE [LARGE SCALE GENOMIC DNA]</scope>
    <source>
        <strain>RIMD 2210633</strain>
    </source>
</reference>
<organism>
    <name type="scientific">Vibrio parahaemolyticus serotype O3:K6 (strain RIMD 2210633)</name>
    <dbReference type="NCBI Taxonomy" id="223926"/>
    <lineage>
        <taxon>Bacteria</taxon>
        <taxon>Pseudomonadati</taxon>
        <taxon>Pseudomonadota</taxon>
        <taxon>Gammaproteobacteria</taxon>
        <taxon>Vibrionales</taxon>
        <taxon>Vibrionaceae</taxon>
        <taxon>Vibrio</taxon>
    </lineage>
</organism>
<dbReference type="EMBL" id="BA000031">
    <property type="protein sequence ID" value="BAC58916.1"/>
    <property type="molecule type" value="Genomic_DNA"/>
</dbReference>
<dbReference type="RefSeq" id="NP_797032.1">
    <property type="nucleotide sequence ID" value="NC_004603.1"/>
</dbReference>
<dbReference type="RefSeq" id="WP_005455943.1">
    <property type="nucleotide sequence ID" value="NC_004603.1"/>
</dbReference>
<dbReference type="SMR" id="Q87RX3"/>
<dbReference type="GeneID" id="1188128"/>
<dbReference type="KEGG" id="vpa:VP0653"/>
<dbReference type="PATRIC" id="fig|223926.6.peg.623"/>
<dbReference type="eggNOG" id="COG0443">
    <property type="taxonomic scope" value="Bacteria"/>
</dbReference>
<dbReference type="HOGENOM" id="CLU_005965_2_1_6"/>
<dbReference type="Proteomes" id="UP000002493">
    <property type="component" value="Chromosome 1"/>
</dbReference>
<dbReference type="GO" id="GO:0005524">
    <property type="term" value="F:ATP binding"/>
    <property type="evidence" value="ECO:0007669"/>
    <property type="project" value="UniProtKB-UniRule"/>
</dbReference>
<dbReference type="GO" id="GO:0140662">
    <property type="term" value="F:ATP-dependent protein folding chaperone"/>
    <property type="evidence" value="ECO:0007669"/>
    <property type="project" value="InterPro"/>
</dbReference>
<dbReference type="GO" id="GO:0051082">
    <property type="term" value="F:unfolded protein binding"/>
    <property type="evidence" value="ECO:0007669"/>
    <property type="project" value="InterPro"/>
</dbReference>
<dbReference type="CDD" id="cd10234">
    <property type="entry name" value="ASKHA_NBD_HSP70_DnaK-like"/>
    <property type="match status" value="1"/>
</dbReference>
<dbReference type="FunFam" id="2.60.34.10:FF:000014">
    <property type="entry name" value="Chaperone protein DnaK HSP70"/>
    <property type="match status" value="1"/>
</dbReference>
<dbReference type="FunFam" id="3.30.30.30:FF:000003">
    <property type="entry name" value="Heat shock protein 9"/>
    <property type="match status" value="1"/>
</dbReference>
<dbReference type="FunFam" id="1.20.1270.10:FF:000001">
    <property type="entry name" value="Molecular chaperone DnaK"/>
    <property type="match status" value="1"/>
</dbReference>
<dbReference type="FunFam" id="3.30.420.40:FF:000004">
    <property type="entry name" value="Molecular chaperone DnaK"/>
    <property type="match status" value="1"/>
</dbReference>
<dbReference type="FunFam" id="3.90.640.10:FF:000003">
    <property type="entry name" value="Molecular chaperone DnaK"/>
    <property type="match status" value="1"/>
</dbReference>
<dbReference type="Gene3D" id="1.20.1270.10">
    <property type="match status" value="1"/>
</dbReference>
<dbReference type="Gene3D" id="3.30.420.40">
    <property type="match status" value="2"/>
</dbReference>
<dbReference type="Gene3D" id="3.90.640.10">
    <property type="entry name" value="Actin, Chain A, domain 4"/>
    <property type="match status" value="1"/>
</dbReference>
<dbReference type="Gene3D" id="2.60.34.10">
    <property type="entry name" value="Substrate Binding Domain Of DNAk, Chain A, domain 1"/>
    <property type="match status" value="1"/>
</dbReference>
<dbReference type="HAMAP" id="MF_00332">
    <property type="entry name" value="DnaK"/>
    <property type="match status" value="1"/>
</dbReference>
<dbReference type="InterPro" id="IPR043129">
    <property type="entry name" value="ATPase_NBD"/>
</dbReference>
<dbReference type="InterPro" id="IPR012725">
    <property type="entry name" value="Chaperone_DnaK"/>
</dbReference>
<dbReference type="InterPro" id="IPR018181">
    <property type="entry name" value="Heat_shock_70_CS"/>
</dbReference>
<dbReference type="InterPro" id="IPR029048">
    <property type="entry name" value="HSP70_C_sf"/>
</dbReference>
<dbReference type="InterPro" id="IPR029047">
    <property type="entry name" value="HSP70_peptide-bd_sf"/>
</dbReference>
<dbReference type="InterPro" id="IPR013126">
    <property type="entry name" value="Hsp_70_fam"/>
</dbReference>
<dbReference type="NCBIfam" id="NF001413">
    <property type="entry name" value="PRK00290.1"/>
    <property type="match status" value="1"/>
</dbReference>
<dbReference type="NCBIfam" id="NF003520">
    <property type="entry name" value="PRK05183.1"/>
    <property type="match status" value="1"/>
</dbReference>
<dbReference type="NCBIfam" id="TIGR02350">
    <property type="entry name" value="prok_dnaK"/>
    <property type="match status" value="1"/>
</dbReference>
<dbReference type="PANTHER" id="PTHR19375">
    <property type="entry name" value="HEAT SHOCK PROTEIN 70KDA"/>
    <property type="match status" value="1"/>
</dbReference>
<dbReference type="Pfam" id="PF00012">
    <property type="entry name" value="HSP70"/>
    <property type="match status" value="1"/>
</dbReference>
<dbReference type="PRINTS" id="PR00301">
    <property type="entry name" value="HEATSHOCK70"/>
</dbReference>
<dbReference type="SUPFAM" id="SSF53067">
    <property type="entry name" value="Actin-like ATPase domain"/>
    <property type="match status" value="2"/>
</dbReference>
<dbReference type="SUPFAM" id="SSF100934">
    <property type="entry name" value="Heat shock protein 70kD (HSP70), C-terminal subdomain"/>
    <property type="match status" value="1"/>
</dbReference>
<dbReference type="SUPFAM" id="SSF100920">
    <property type="entry name" value="Heat shock protein 70kD (HSP70), peptide-binding domain"/>
    <property type="match status" value="1"/>
</dbReference>
<dbReference type="PROSITE" id="PS00297">
    <property type="entry name" value="HSP70_1"/>
    <property type="match status" value="1"/>
</dbReference>
<dbReference type="PROSITE" id="PS00329">
    <property type="entry name" value="HSP70_2"/>
    <property type="match status" value="1"/>
</dbReference>
<dbReference type="PROSITE" id="PS01036">
    <property type="entry name" value="HSP70_3"/>
    <property type="match status" value="1"/>
</dbReference>
<name>DNAK_VIBPA</name>
<sequence>MGKIIGIDLGTTNSCVAVLDGDKPRVIENAEGERTTASVIAYTDGETLVGQPAKRQAVTNPTNTLFAIKRLIGRRFEDEEVQRDIEIMPYKIVKADNGDAWVEAKGQKMAAPQVSAEVLKKMKKTAEDFLGEEVTGAVITVPAYFNDAQRQATKDAGRIAGLEVKRIINEPTAAALAYGLDKKGGDRTIAVYDLGGGTFDISIIEIDEVEGEKTFEVLATNGDTHLGGEDFDNRLINYLVDEFKKEQGIDLKNDPLAMQRVKEAAEKAKIELSSTSQTDVNLPYVTADATGPKHMNIKVTRAKLESLVEDLVQRSLEPLKVALADADLSVNDITDVILVGGQTRMPMVQAKVAEFFGKEARRDVNPDEAVAMGAAVQGGVLAGEVKDVLLLDVTPLSLGIETMGGVMTKLVEKNTTIPTKANQVFSTAEDNQSAVTIHVLQGERKQAMYNKSLGQFNLEGIQPAPRGMPQIEVTFDLDADGILHVSAKDKQTGKEQKITIQASGGLSDDEIEKMVQEAEANKEADKKFEELATARNQADQMIHGTRKQMEEAGDALPAEEKEKIETAISELEEARKGEDKEAIDAKVQALMTAAQKLMEIAQQQAQAQQAQGADAGAQSKDDDVVDAEFEEVKDDKK</sequence>
<accession>Q87RX3</accession>
<feature type="chain" id="PRO_0000078583" description="Chaperone protein DnaK">
    <location>
        <begin position="1"/>
        <end position="637"/>
    </location>
</feature>
<feature type="region of interest" description="Disordered" evidence="2">
    <location>
        <begin position="600"/>
        <end position="637"/>
    </location>
</feature>
<feature type="compositionally biased region" description="Low complexity" evidence="2">
    <location>
        <begin position="601"/>
        <end position="618"/>
    </location>
</feature>
<feature type="compositionally biased region" description="Acidic residues" evidence="2">
    <location>
        <begin position="623"/>
        <end position="637"/>
    </location>
</feature>
<feature type="modified residue" description="Phosphothreonine; by autocatalysis" evidence="1">
    <location>
        <position position="198"/>
    </location>
</feature>
<comment type="function">
    <text evidence="1">Acts as a chaperone.</text>
</comment>
<comment type="induction">
    <text evidence="1">By stress conditions e.g. heat shock.</text>
</comment>
<comment type="similarity">
    <text evidence="1">Belongs to the heat shock protein 70 family.</text>
</comment>
<gene>
    <name evidence="1" type="primary">dnaK</name>
    <name type="ordered locus">VP0653</name>
</gene>